<reference key="1">
    <citation type="journal article" date="1999" name="Nature">
        <title>Sequence and analysis of chromosome 2 of the plant Arabidopsis thaliana.</title>
        <authorList>
            <person name="Lin X."/>
            <person name="Kaul S."/>
            <person name="Rounsley S.D."/>
            <person name="Shea T.P."/>
            <person name="Benito M.-I."/>
            <person name="Town C.D."/>
            <person name="Fujii C.Y."/>
            <person name="Mason T.M."/>
            <person name="Bowman C.L."/>
            <person name="Barnstead M.E."/>
            <person name="Feldblyum T.V."/>
            <person name="Buell C.R."/>
            <person name="Ketchum K.A."/>
            <person name="Lee J.J."/>
            <person name="Ronning C.M."/>
            <person name="Koo H.L."/>
            <person name="Moffat K.S."/>
            <person name="Cronin L.A."/>
            <person name="Shen M."/>
            <person name="Pai G."/>
            <person name="Van Aken S."/>
            <person name="Umayam L."/>
            <person name="Tallon L.J."/>
            <person name="Gill J.E."/>
            <person name="Adams M.D."/>
            <person name="Carrera A.J."/>
            <person name="Creasy T.H."/>
            <person name="Goodman H.M."/>
            <person name="Somerville C.R."/>
            <person name="Copenhaver G.P."/>
            <person name="Preuss D."/>
            <person name="Nierman W.C."/>
            <person name="White O."/>
            <person name="Eisen J.A."/>
            <person name="Salzberg S.L."/>
            <person name="Fraser C.M."/>
            <person name="Venter J.C."/>
        </authorList>
    </citation>
    <scope>NUCLEOTIDE SEQUENCE [LARGE SCALE GENOMIC DNA]</scope>
    <source>
        <strain>cv. Columbia</strain>
    </source>
</reference>
<reference key="2">
    <citation type="journal article" date="2017" name="Plant J.">
        <title>Araport11: a complete reannotation of the Arabidopsis thaliana reference genome.</title>
        <authorList>
            <person name="Cheng C.Y."/>
            <person name="Krishnakumar V."/>
            <person name="Chan A.P."/>
            <person name="Thibaud-Nissen F."/>
            <person name="Schobel S."/>
            <person name="Town C.D."/>
        </authorList>
    </citation>
    <scope>GENOME REANNOTATION</scope>
    <source>
        <strain>cv. Columbia</strain>
    </source>
</reference>
<reference key="3">
    <citation type="journal article" date="2003" name="Science">
        <title>Empirical analysis of transcriptional activity in the Arabidopsis genome.</title>
        <authorList>
            <person name="Yamada K."/>
            <person name="Lim J."/>
            <person name="Dale J.M."/>
            <person name="Chen H."/>
            <person name="Shinn P."/>
            <person name="Palm C.J."/>
            <person name="Southwick A.M."/>
            <person name="Wu H.C."/>
            <person name="Kim C.J."/>
            <person name="Nguyen M."/>
            <person name="Pham P.K."/>
            <person name="Cheuk R.F."/>
            <person name="Karlin-Newmann G."/>
            <person name="Liu S.X."/>
            <person name="Lam B."/>
            <person name="Sakano H."/>
            <person name="Wu T."/>
            <person name="Yu G."/>
            <person name="Miranda M."/>
            <person name="Quach H.L."/>
            <person name="Tripp M."/>
            <person name="Chang C.H."/>
            <person name="Lee J.M."/>
            <person name="Toriumi M.J."/>
            <person name="Chan M.M."/>
            <person name="Tang C.C."/>
            <person name="Onodera C.S."/>
            <person name="Deng J.M."/>
            <person name="Akiyama K."/>
            <person name="Ansari Y."/>
            <person name="Arakawa T."/>
            <person name="Banh J."/>
            <person name="Banno F."/>
            <person name="Bowser L."/>
            <person name="Brooks S.Y."/>
            <person name="Carninci P."/>
            <person name="Chao Q."/>
            <person name="Choy N."/>
            <person name="Enju A."/>
            <person name="Goldsmith A.D."/>
            <person name="Gurjal M."/>
            <person name="Hansen N.F."/>
            <person name="Hayashizaki Y."/>
            <person name="Johnson-Hopson C."/>
            <person name="Hsuan V.W."/>
            <person name="Iida K."/>
            <person name="Karnes M."/>
            <person name="Khan S."/>
            <person name="Koesema E."/>
            <person name="Ishida J."/>
            <person name="Jiang P.X."/>
            <person name="Jones T."/>
            <person name="Kawai J."/>
            <person name="Kamiya A."/>
            <person name="Meyers C."/>
            <person name="Nakajima M."/>
            <person name="Narusaka M."/>
            <person name="Seki M."/>
            <person name="Sakurai T."/>
            <person name="Satou M."/>
            <person name="Tamse R."/>
            <person name="Vaysberg M."/>
            <person name="Wallender E.K."/>
            <person name="Wong C."/>
            <person name="Yamamura Y."/>
            <person name="Yuan S."/>
            <person name="Shinozaki K."/>
            <person name="Davis R.W."/>
            <person name="Theologis A."/>
            <person name="Ecker J.R."/>
        </authorList>
    </citation>
    <scope>NUCLEOTIDE SEQUENCE [LARGE SCALE MRNA] (ISOFORM 1)</scope>
    <source>
        <strain>cv. Columbia</strain>
    </source>
</reference>
<reference key="4">
    <citation type="journal article" date="2008" name="Plant Cell">
        <title>Identification of the gene encoding the alpha1,3-mannosyltransferase (ALG3) in Arabidopsis and characterization of downstream n-glycan processing.</title>
        <authorList>
            <person name="Henquet M."/>
            <person name="Lehle L."/>
            <person name="Schreuder M."/>
            <person name="Rouwendal G."/>
            <person name="Molthoff J."/>
            <person name="Helsper J."/>
            <person name="van der Krol S."/>
            <person name="Bosch D."/>
        </authorList>
    </citation>
    <scope>FUNCTION</scope>
    <scope>CATALYTIC ACTIVITY</scope>
    <scope>PATHWAY</scope>
    <scope>SUBCELLULAR LOCATION</scope>
</reference>
<reference key="5">
    <citation type="journal article" date="2010" name="Glycobiology">
        <title>Arabidopsis thaliana ALG3 mutant synthesizes immature oligosaccharides in the ER and accumulates unique N-glycans.</title>
        <authorList>
            <person name="Kajiura H."/>
            <person name="Seki T."/>
            <person name="Fujiyama K."/>
        </authorList>
    </citation>
    <scope>FUNCTION</scope>
    <scope>SUBCELLULAR LOCATION</scope>
    <scope>DISRUPTION PHENOTYPE</scope>
</reference>
<evidence type="ECO:0000255" key="1"/>
<evidence type="ECO:0000269" key="2">
    <source>
    </source>
</evidence>
<evidence type="ECO:0000269" key="3">
    <source>
    </source>
</evidence>
<evidence type="ECO:0000305" key="4"/>
<evidence type="ECO:0000305" key="5">
    <source>
    </source>
</evidence>
<keyword id="KW-0025">Alternative splicing</keyword>
<keyword id="KW-0256">Endoplasmic reticulum</keyword>
<keyword id="KW-0325">Glycoprotein</keyword>
<keyword id="KW-0328">Glycosyltransferase</keyword>
<keyword id="KW-0472">Membrane</keyword>
<keyword id="KW-1185">Reference proteome</keyword>
<keyword id="KW-0808">Transferase</keyword>
<keyword id="KW-0812">Transmembrane</keyword>
<keyword id="KW-1133">Transmembrane helix</keyword>
<comment type="function">
    <text evidence="2 3">Dol-P-Man:Man(5)GlcNAc(2)-PP-Dol alpha-1,3-mannosyltransferase that operates in the biosynthetic pathway of dolichol-linked oligosaccharides, the glycan precursors employed in protein asparagine (N)-glycosylation. The assembly of dolichol-linked oligosaccharides begins on the cytosolic side of the endoplasmic reticulum membrane and finishes in its lumen. The sequential addition of sugars to dolichol pyrophosphate produces dolichol-linked oligosaccharides containing fourteen sugars, including two GlcNAcs, nine mannoses and three glucoses. Once assembled, the oligosaccharide is transferred from the lipid to nascent proteins by oligosaccharyltransferases. In the lumen of the endoplasmic reticulum, adds the first dolichyl beta-D-mannosyl phosphate derived mannose in an alpha-1,3 linkage to Man(5)GlcNAc(2)-PP-dolichol to produce Man(6)GlcNAc(2)-PP-dolichol. Man(6)GlcNAc(2)-PP-dolichol is a substrate for ALG9, the following enzyme in the biosynthetic pathway.</text>
</comment>
<comment type="catalytic activity">
    <reaction evidence="2">
        <text>an alpha-D-Man-(1-&gt;2)-alpha-D-Man-(1-&gt;2)-alpha-D-Man-(1-&gt;3)-[alpha-D-Man-(1-&gt;6)]-beta-D-Man-(1-&gt;4)-beta-D-GlcNAc-(1-&gt;4)-alpha-D-GlcNAc-diphospho-di-trans,poly-cis-dolichol + a di-trans,poly-cis-dolichyl beta-D-mannosyl phosphate = an alpha-D-Man-(1-&gt;2)-alpha-D-Man-(1-&gt;2)-alpha-D-Man-(1-&gt;3)-[alpha-D-Man-(1-&gt;3)-alpha-D-Man-(1-&gt;6)]-beta-D-Man-(1-&gt;4)-beta-D-GlcNAc-(1-&gt;4)-alpha-D-GlcNAc-diphospho-di-trans,poly-cis-dolichol + a di-trans,poly-cis-dolichyl phosphate + H(+)</text>
        <dbReference type="Rhea" id="RHEA:29527"/>
        <dbReference type="Rhea" id="RHEA-COMP:19498"/>
        <dbReference type="Rhea" id="RHEA-COMP:19501"/>
        <dbReference type="Rhea" id="RHEA-COMP:19516"/>
        <dbReference type="Rhea" id="RHEA-COMP:19517"/>
        <dbReference type="ChEBI" id="CHEBI:15378"/>
        <dbReference type="ChEBI" id="CHEBI:57683"/>
        <dbReference type="ChEBI" id="CHEBI:58211"/>
        <dbReference type="ChEBI" id="CHEBI:132515"/>
        <dbReference type="ChEBI" id="CHEBI:132516"/>
        <dbReference type="EC" id="2.4.1.258"/>
    </reaction>
    <physiologicalReaction direction="left-to-right" evidence="5">
        <dbReference type="Rhea" id="RHEA:29528"/>
    </physiologicalReaction>
</comment>
<comment type="pathway">
    <text evidence="5">Protein modification; protein glycosylation.</text>
</comment>
<comment type="subcellular location">
    <subcellularLocation>
        <location evidence="2 3">Endoplasmic reticulum membrane</location>
        <topology evidence="2 3">Multi-pass membrane protein</topology>
    </subcellularLocation>
</comment>
<comment type="alternative products">
    <event type="alternative splicing"/>
    <isoform>
        <id>O82244-1</id>
        <name>1</name>
        <sequence type="displayed"/>
    </isoform>
    <isoform>
        <id>O82244-2</id>
        <name>2</name>
        <sequence type="described" ref="VSP_041719"/>
    </isoform>
    <isoform>
        <id>O82244-3</id>
        <name>3</name>
        <sequence type="described" ref="VSP_041720"/>
    </isoform>
</comment>
<comment type="disruption phenotype">
    <text evidence="3">No obvious phenotype under normal and high temperature or salt/osmotic stress conditions.</text>
</comment>
<comment type="miscellaneous">
    <text>In the absence of ALG3 activity, the N-glycans transferred to proteins are aberrant, indicating that the oligosaccharyltransferase (OST) complex is substrate-tolerant.</text>
</comment>
<comment type="similarity">
    <text evidence="4">Belongs to the glycosyltransferase ALG3 family.</text>
</comment>
<protein>
    <recommendedName>
        <fullName evidence="5">Dol-P-Man:Man(5)GlcNAc(2)-PP-Dol alpha-1,3-mannosyltransferase</fullName>
        <ecNumber evidence="2">2.4.1.258</ecNumber>
    </recommendedName>
    <alternativeName>
        <fullName>Alpha-1,3-mannosyltransferase ALG3</fullName>
    </alternativeName>
    <alternativeName>
        <fullName>Asparagine-linked glycosylation protein 3</fullName>
        <shortName>AtALG3</shortName>
    </alternativeName>
    <alternativeName>
        <fullName>Not56-like protein</fullName>
    </alternativeName>
</protein>
<feature type="chain" id="PRO_0000412588" description="Dol-P-Man:Man(5)GlcNAc(2)-PP-Dol alpha-1,3-mannosyltransferase">
    <location>
        <begin position="1"/>
        <end position="438"/>
    </location>
</feature>
<feature type="transmembrane region" description="Helical" evidence="1">
    <location>
        <begin position="32"/>
        <end position="52"/>
    </location>
</feature>
<feature type="transmembrane region" description="Helical" evidence="1">
    <location>
        <begin position="78"/>
        <end position="100"/>
    </location>
</feature>
<feature type="transmembrane region" description="Helical" evidence="1">
    <location>
        <begin position="112"/>
        <end position="132"/>
    </location>
</feature>
<feature type="transmembrane region" description="Helical" evidence="1">
    <location>
        <begin position="155"/>
        <end position="177"/>
    </location>
</feature>
<feature type="transmembrane region" description="Helical" evidence="1">
    <location>
        <begin position="196"/>
        <end position="216"/>
    </location>
</feature>
<feature type="transmembrane region" description="Helical" evidence="1">
    <location>
        <begin position="218"/>
        <end position="238"/>
    </location>
</feature>
<feature type="transmembrane region" description="Helical" evidence="1">
    <location>
        <begin position="271"/>
        <end position="291"/>
    </location>
</feature>
<feature type="transmembrane region" description="Helical" evidence="1">
    <location>
        <begin position="330"/>
        <end position="350"/>
    </location>
</feature>
<feature type="transmembrane region" description="Helical" evidence="1">
    <location>
        <begin position="374"/>
        <end position="394"/>
    </location>
</feature>
<feature type="transmembrane region" description="Helical" evidence="1">
    <location>
        <begin position="401"/>
        <end position="421"/>
    </location>
</feature>
<feature type="glycosylation site" description="N-linked (GlcNAc...) asparagine" evidence="1">
    <location>
        <position position="23"/>
    </location>
</feature>
<feature type="glycosylation site" description="N-linked (GlcNAc...) asparagine" evidence="1">
    <location>
        <position position="103"/>
    </location>
</feature>
<feature type="splice variant" id="VSP_041719" description="In isoform 2." evidence="4">
    <location>
        <position position="136"/>
    </location>
</feature>
<feature type="splice variant" id="VSP_041720" description="In isoform 3." evidence="4">
    <location>
        <begin position="381"/>
        <end position="438"/>
    </location>
</feature>
<feature type="sequence conflict" description="In Ref. 3; AAL16193/AAP37662." evidence="4" ref="3">
    <original>V</original>
    <variation>A</variation>
    <location>
        <position position="228"/>
    </location>
</feature>
<name>ALG3_ARATH</name>
<dbReference type="EC" id="2.4.1.258" evidence="2"/>
<dbReference type="EMBL" id="AC005309">
    <property type="protein sequence ID" value="AAC63631.1"/>
    <property type="molecule type" value="Genomic_DNA"/>
</dbReference>
<dbReference type="EMBL" id="CP002685">
    <property type="protein sequence ID" value="AEC10884.1"/>
    <property type="molecule type" value="Genomic_DNA"/>
</dbReference>
<dbReference type="EMBL" id="CP002685">
    <property type="protein sequence ID" value="AEC10885.1"/>
    <property type="molecule type" value="Genomic_DNA"/>
</dbReference>
<dbReference type="EMBL" id="CP002685">
    <property type="protein sequence ID" value="ANM62178.1"/>
    <property type="molecule type" value="Genomic_DNA"/>
</dbReference>
<dbReference type="EMBL" id="AF428424">
    <property type="protein sequence ID" value="AAL16193.1"/>
    <property type="molecule type" value="mRNA"/>
</dbReference>
<dbReference type="EMBL" id="BT008303">
    <property type="protein sequence ID" value="AAP37662.1"/>
    <property type="molecule type" value="mRNA"/>
</dbReference>
<dbReference type="PIR" id="B84919">
    <property type="entry name" value="B84919"/>
</dbReference>
<dbReference type="RefSeq" id="NP_001031556.1">
    <molecule id="O82244-2"/>
    <property type="nucleotide sequence ID" value="NM_001036479.1"/>
</dbReference>
<dbReference type="RefSeq" id="NP_001031557.1">
    <molecule id="O82244-3"/>
    <property type="nucleotide sequence ID" value="NM_001036480.1"/>
</dbReference>
<dbReference type="RefSeq" id="NP_182297.1">
    <molecule id="O82244-1"/>
    <property type="nucleotide sequence ID" value="NM_130343.4"/>
</dbReference>
<dbReference type="FunCoup" id="O82244">
    <property type="interactions" value="4055"/>
</dbReference>
<dbReference type="STRING" id="3702.O82244"/>
<dbReference type="CAZy" id="GT58">
    <property type="family name" value="Glycosyltransferase Family 58"/>
</dbReference>
<dbReference type="GlyCosmos" id="O82244">
    <property type="glycosylation" value="2 sites, No reported glycans"/>
</dbReference>
<dbReference type="GlyGen" id="O82244">
    <property type="glycosylation" value="3 sites"/>
</dbReference>
<dbReference type="PaxDb" id="3702-AT2G47760.1"/>
<dbReference type="ProteomicsDB" id="244839">
    <molecule id="O82244-1"/>
</dbReference>
<dbReference type="EnsemblPlants" id="AT2G47760.2">
    <molecule id="O82244-2"/>
    <property type="protein sequence ID" value="AT2G47760.2"/>
    <property type="gene ID" value="AT2G47760"/>
</dbReference>
<dbReference type="EnsemblPlants" id="AT2G47760.3">
    <molecule id="O82244-3"/>
    <property type="protein sequence ID" value="AT2G47760.3"/>
    <property type="gene ID" value="AT2G47760"/>
</dbReference>
<dbReference type="EnsemblPlants" id="AT2G47760.5">
    <molecule id="O82244-1"/>
    <property type="protein sequence ID" value="AT2G47760.5"/>
    <property type="gene ID" value="AT2G47760"/>
</dbReference>
<dbReference type="GeneID" id="819388"/>
<dbReference type="Gramene" id="AT2G47760.2">
    <molecule id="O82244-2"/>
    <property type="protein sequence ID" value="AT2G47760.2"/>
    <property type="gene ID" value="AT2G47760"/>
</dbReference>
<dbReference type="Gramene" id="AT2G47760.3">
    <molecule id="O82244-3"/>
    <property type="protein sequence ID" value="AT2G47760.3"/>
    <property type="gene ID" value="AT2G47760"/>
</dbReference>
<dbReference type="Gramene" id="AT2G47760.5">
    <molecule id="O82244-1"/>
    <property type="protein sequence ID" value="AT2G47760.5"/>
    <property type="gene ID" value="AT2G47760"/>
</dbReference>
<dbReference type="KEGG" id="ath:AT2G47760"/>
<dbReference type="Araport" id="AT2G47760"/>
<dbReference type="TAIR" id="AT2G47760">
    <property type="gene designation" value="ALG3"/>
</dbReference>
<dbReference type="eggNOG" id="KOG2762">
    <property type="taxonomic scope" value="Eukaryota"/>
</dbReference>
<dbReference type="InParanoid" id="O82244"/>
<dbReference type="OMA" id="PERYGIH"/>
<dbReference type="PhylomeDB" id="O82244"/>
<dbReference type="BRENDA" id="2.4.1.258">
    <property type="organism ID" value="399"/>
</dbReference>
<dbReference type="UniPathway" id="UPA00378"/>
<dbReference type="PRO" id="PR:O82244"/>
<dbReference type="Proteomes" id="UP000006548">
    <property type="component" value="Chromosome 2"/>
</dbReference>
<dbReference type="ExpressionAtlas" id="O82244">
    <property type="expression patterns" value="baseline and differential"/>
</dbReference>
<dbReference type="GO" id="GO:0005783">
    <property type="term" value="C:endoplasmic reticulum"/>
    <property type="evidence" value="ECO:0000314"/>
    <property type="project" value="TAIR"/>
</dbReference>
<dbReference type="GO" id="GO:0005789">
    <property type="term" value="C:endoplasmic reticulum membrane"/>
    <property type="evidence" value="ECO:0007669"/>
    <property type="project" value="UniProtKB-SubCell"/>
</dbReference>
<dbReference type="GO" id="GO:0000033">
    <property type="term" value="F:alpha-1,3-mannosyltransferase activity"/>
    <property type="evidence" value="ECO:0000314"/>
    <property type="project" value="TAIR"/>
</dbReference>
<dbReference type="GO" id="GO:0052925">
    <property type="term" value="F:dol-P-Man:Man(5)GlcNAc(2)-PP-Dol alpha-1,3-mannosyltransferase activity"/>
    <property type="evidence" value="ECO:0007669"/>
    <property type="project" value="UniProtKB-EC"/>
</dbReference>
<dbReference type="GO" id="GO:0006486">
    <property type="term" value="P:protein glycosylation"/>
    <property type="evidence" value="ECO:0000315"/>
    <property type="project" value="TAIR"/>
</dbReference>
<dbReference type="InterPro" id="IPR007873">
    <property type="entry name" value="Glycosyltransferase_ALG3"/>
</dbReference>
<dbReference type="PANTHER" id="PTHR12646:SF0">
    <property type="entry name" value="DOL-P-MAN:MAN(5)GLCNAC(2)-PP-DOL ALPHA-1,3-MANNOSYLTRANSFERASE"/>
    <property type="match status" value="1"/>
</dbReference>
<dbReference type="PANTHER" id="PTHR12646">
    <property type="entry name" value="NOT56 - RELATED"/>
    <property type="match status" value="1"/>
</dbReference>
<dbReference type="Pfam" id="PF05208">
    <property type="entry name" value="ALG3"/>
    <property type="match status" value="1"/>
</dbReference>
<organism>
    <name type="scientific">Arabidopsis thaliana</name>
    <name type="common">Mouse-ear cress</name>
    <dbReference type="NCBI Taxonomy" id="3702"/>
    <lineage>
        <taxon>Eukaryota</taxon>
        <taxon>Viridiplantae</taxon>
        <taxon>Streptophyta</taxon>
        <taxon>Embryophyta</taxon>
        <taxon>Tracheophyta</taxon>
        <taxon>Spermatophyta</taxon>
        <taxon>Magnoliopsida</taxon>
        <taxon>eudicotyledons</taxon>
        <taxon>Gunneridae</taxon>
        <taxon>Pentapetalae</taxon>
        <taxon>rosids</taxon>
        <taxon>malvids</taxon>
        <taxon>Brassicales</taxon>
        <taxon>Brassicaceae</taxon>
        <taxon>Camelineae</taxon>
        <taxon>Arabidopsis</taxon>
    </lineage>
</organism>
<proteinExistence type="evidence at protein level"/>
<sequence>MAGASSPASLRASRSRRLGKETNRSDLFKKPAVPFAFALILADAILVALIIAYVPYTKIDWDAYMSQVSGFLGGERDYGNLKGDTGPLVYPAGFLYVYSAVQNLTGGEVYPAQILFGVLYIVNLGIVLIIYVKTDVVPWWALSLLCLSKRIHSIFVLRLFNDCFAMTLLHASMALFLYRKWHLGMLVFSGAVSVKMNVLLYAPTLLLLLLKAMNIIGVVSALAGAALVQILVGLPFLITYPVSYIANAFDLGRVFIHFWSVNFKFVPERVFVSKEFAVCLLIAHLFLLVAFANYKWCKHEGGIIGFMRSRHFFLTLPSSLSFSDVSASRIITKEHVVTAMFVGNFIGIVFARSLHYQFYSWYFYSLPYLLWRTPFPTWLRLIMFLGIELCWNVYPSTPSSSGLLLCLHLIILVGLWLAPSVDPYQLKEHPKSQIHKKA</sequence>
<accession>O82244</accession>
<accession>F4IM37</accession>
<accession>F4IM39</accession>
<accession>Q944H6</accession>
<gene>
    <name type="primary">ALG3</name>
    <name type="ordered locus">At2g47760</name>
    <name type="ORF">F17A22.15</name>
</gene>